<proteinExistence type="inferred from homology"/>
<sequence>MAEAFRGEYNQKVDAKARVSIPAPFRRVIEAGDPKYSGGRASFVLVYGGDRSYVECYTMTEMDRIEERIRALPMGTPRRRYLERNMITLALNMELDEDGRIVLPPKGREKLGITPDELKGGTEATFAGTLNKFQIWKADTYAAELAAEEEVILPPGADMLSLLEETGL</sequence>
<comment type="subunit">
    <text evidence="1">Forms oligomers.</text>
</comment>
<comment type="subcellular location">
    <subcellularLocation>
        <location evidence="1">Cytoplasm</location>
        <location evidence="1">Nucleoid</location>
    </subcellularLocation>
</comment>
<comment type="similarity">
    <text evidence="1">Belongs to the MraZ family.</text>
</comment>
<dbReference type="EMBL" id="CP000661">
    <property type="protein sequence ID" value="ABP69588.1"/>
    <property type="molecule type" value="Genomic_DNA"/>
</dbReference>
<dbReference type="SMR" id="A4WQC4"/>
<dbReference type="STRING" id="349102.Rsph17025_0682"/>
<dbReference type="KEGG" id="rsq:Rsph17025_0682"/>
<dbReference type="eggNOG" id="COG2001">
    <property type="taxonomic scope" value="Bacteria"/>
</dbReference>
<dbReference type="HOGENOM" id="CLU_107907_1_0_5"/>
<dbReference type="BioCyc" id="RSPH349102:G1G8M-704-MONOMER"/>
<dbReference type="GO" id="GO:0005737">
    <property type="term" value="C:cytoplasm"/>
    <property type="evidence" value="ECO:0007669"/>
    <property type="project" value="UniProtKB-UniRule"/>
</dbReference>
<dbReference type="GO" id="GO:0009295">
    <property type="term" value="C:nucleoid"/>
    <property type="evidence" value="ECO:0007669"/>
    <property type="project" value="UniProtKB-SubCell"/>
</dbReference>
<dbReference type="GO" id="GO:0003700">
    <property type="term" value="F:DNA-binding transcription factor activity"/>
    <property type="evidence" value="ECO:0007669"/>
    <property type="project" value="UniProtKB-UniRule"/>
</dbReference>
<dbReference type="GO" id="GO:0000976">
    <property type="term" value="F:transcription cis-regulatory region binding"/>
    <property type="evidence" value="ECO:0007669"/>
    <property type="project" value="TreeGrafter"/>
</dbReference>
<dbReference type="GO" id="GO:2000143">
    <property type="term" value="P:negative regulation of DNA-templated transcription initiation"/>
    <property type="evidence" value="ECO:0007669"/>
    <property type="project" value="TreeGrafter"/>
</dbReference>
<dbReference type="CDD" id="cd16321">
    <property type="entry name" value="MraZ_C"/>
    <property type="match status" value="1"/>
</dbReference>
<dbReference type="CDD" id="cd16320">
    <property type="entry name" value="MraZ_N"/>
    <property type="match status" value="1"/>
</dbReference>
<dbReference type="Gene3D" id="3.40.1550.20">
    <property type="entry name" value="Transcriptional regulator MraZ domain"/>
    <property type="match status" value="1"/>
</dbReference>
<dbReference type="HAMAP" id="MF_01008">
    <property type="entry name" value="MraZ"/>
    <property type="match status" value="1"/>
</dbReference>
<dbReference type="InterPro" id="IPR003444">
    <property type="entry name" value="MraZ"/>
</dbReference>
<dbReference type="InterPro" id="IPR035644">
    <property type="entry name" value="MraZ_C"/>
</dbReference>
<dbReference type="InterPro" id="IPR020603">
    <property type="entry name" value="MraZ_dom"/>
</dbReference>
<dbReference type="InterPro" id="IPR035642">
    <property type="entry name" value="MraZ_N"/>
</dbReference>
<dbReference type="InterPro" id="IPR038619">
    <property type="entry name" value="MraZ_sf"/>
</dbReference>
<dbReference type="InterPro" id="IPR007159">
    <property type="entry name" value="SpoVT-AbrB_dom"/>
</dbReference>
<dbReference type="InterPro" id="IPR037914">
    <property type="entry name" value="SpoVT-AbrB_sf"/>
</dbReference>
<dbReference type="NCBIfam" id="NF001476">
    <property type="entry name" value="PRK00326.2-2"/>
    <property type="match status" value="1"/>
</dbReference>
<dbReference type="PANTHER" id="PTHR34701">
    <property type="entry name" value="TRANSCRIPTIONAL REGULATOR MRAZ"/>
    <property type="match status" value="1"/>
</dbReference>
<dbReference type="PANTHER" id="PTHR34701:SF1">
    <property type="entry name" value="TRANSCRIPTIONAL REGULATOR MRAZ"/>
    <property type="match status" value="1"/>
</dbReference>
<dbReference type="Pfam" id="PF02381">
    <property type="entry name" value="MraZ"/>
    <property type="match status" value="1"/>
</dbReference>
<dbReference type="SUPFAM" id="SSF89447">
    <property type="entry name" value="AbrB/MazE/MraZ-like"/>
    <property type="match status" value="1"/>
</dbReference>
<dbReference type="PROSITE" id="PS51740">
    <property type="entry name" value="SPOVT_ABRB"/>
    <property type="match status" value="2"/>
</dbReference>
<name>MRAZ_CERS5</name>
<accession>A4WQC4</accession>
<reference key="1">
    <citation type="submission" date="2007-04" db="EMBL/GenBank/DDBJ databases">
        <title>Complete sequence of chromosome of Rhodobacter sphaeroides ATCC 17025.</title>
        <authorList>
            <consortium name="US DOE Joint Genome Institute"/>
            <person name="Copeland A."/>
            <person name="Lucas S."/>
            <person name="Lapidus A."/>
            <person name="Barry K."/>
            <person name="Detter J.C."/>
            <person name="Glavina del Rio T."/>
            <person name="Hammon N."/>
            <person name="Israni S."/>
            <person name="Dalin E."/>
            <person name="Tice H."/>
            <person name="Pitluck S."/>
            <person name="Chertkov O."/>
            <person name="Brettin T."/>
            <person name="Bruce D."/>
            <person name="Han C."/>
            <person name="Schmutz J."/>
            <person name="Larimer F."/>
            <person name="Land M."/>
            <person name="Hauser L."/>
            <person name="Kyrpides N."/>
            <person name="Kim E."/>
            <person name="Richardson P."/>
            <person name="Mackenzie C."/>
            <person name="Choudhary M."/>
            <person name="Donohue T.J."/>
            <person name="Kaplan S."/>
        </authorList>
    </citation>
    <scope>NUCLEOTIDE SEQUENCE [LARGE SCALE GENOMIC DNA]</scope>
    <source>
        <strain>ATCC 17025 / ATH 2.4.3</strain>
    </source>
</reference>
<feature type="chain" id="PRO_1000062918" description="Transcriptional regulator MraZ">
    <location>
        <begin position="1"/>
        <end position="168"/>
    </location>
</feature>
<feature type="domain" description="SpoVT-AbrB 1" evidence="2">
    <location>
        <begin position="8"/>
        <end position="51"/>
    </location>
</feature>
<feature type="domain" description="SpoVT-AbrB 2" evidence="2">
    <location>
        <begin position="90"/>
        <end position="140"/>
    </location>
</feature>
<organism>
    <name type="scientific">Cereibacter sphaeroides (strain ATCC 17025 / ATH 2.4.3)</name>
    <name type="common">Rhodobacter sphaeroides</name>
    <dbReference type="NCBI Taxonomy" id="349102"/>
    <lineage>
        <taxon>Bacteria</taxon>
        <taxon>Pseudomonadati</taxon>
        <taxon>Pseudomonadota</taxon>
        <taxon>Alphaproteobacteria</taxon>
        <taxon>Rhodobacterales</taxon>
        <taxon>Paracoccaceae</taxon>
        <taxon>Cereibacter</taxon>
    </lineage>
</organism>
<protein>
    <recommendedName>
        <fullName>Transcriptional regulator MraZ</fullName>
    </recommendedName>
</protein>
<keyword id="KW-0963">Cytoplasm</keyword>
<keyword id="KW-0238">DNA-binding</keyword>
<keyword id="KW-0677">Repeat</keyword>
<keyword id="KW-0804">Transcription</keyword>
<keyword id="KW-0805">Transcription regulation</keyword>
<gene>
    <name evidence="1" type="primary">mraZ</name>
    <name type="ordered locus">Rsph17025_0682</name>
</gene>
<evidence type="ECO:0000255" key="1">
    <source>
        <dbReference type="HAMAP-Rule" id="MF_01008"/>
    </source>
</evidence>
<evidence type="ECO:0000255" key="2">
    <source>
        <dbReference type="PROSITE-ProRule" id="PRU01076"/>
    </source>
</evidence>